<organism>
    <name type="scientific">Burkholderia pseudomallei (strain 1710b)</name>
    <dbReference type="NCBI Taxonomy" id="320372"/>
    <lineage>
        <taxon>Bacteria</taxon>
        <taxon>Pseudomonadati</taxon>
        <taxon>Pseudomonadota</taxon>
        <taxon>Betaproteobacteria</taxon>
        <taxon>Burkholderiales</taxon>
        <taxon>Burkholderiaceae</taxon>
        <taxon>Burkholderia</taxon>
        <taxon>pseudomallei group</taxon>
    </lineage>
</organism>
<reference key="1">
    <citation type="journal article" date="2010" name="Genome Biol. Evol.">
        <title>Continuing evolution of Burkholderia mallei through genome reduction and large-scale rearrangements.</title>
        <authorList>
            <person name="Losada L."/>
            <person name="Ronning C.M."/>
            <person name="DeShazer D."/>
            <person name="Woods D."/>
            <person name="Fedorova N."/>
            <person name="Kim H.S."/>
            <person name="Shabalina S.A."/>
            <person name="Pearson T.R."/>
            <person name="Brinkac L."/>
            <person name="Tan P."/>
            <person name="Nandi T."/>
            <person name="Crabtree J."/>
            <person name="Badger J."/>
            <person name="Beckstrom-Sternberg S."/>
            <person name="Saqib M."/>
            <person name="Schutzer S.E."/>
            <person name="Keim P."/>
            <person name="Nierman W.C."/>
        </authorList>
    </citation>
    <scope>NUCLEOTIDE SEQUENCE [LARGE SCALE GENOMIC DNA]</scope>
    <source>
        <strain>1710b</strain>
    </source>
</reference>
<keyword id="KW-0030">Aminoacyl-tRNA synthetase</keyword>
<keyword id="KW-0067">ATP-binding</keyword>
<keyword id="KW-0963">Cytoplasm</keyword>
<keyword id="KW-0436">Ligase</keyword>
<keyword id="KW-0479">Metal-binding</keyword>
<keyword id="KW-0547">Nucleotide-binding</keyword>
<keyword id="KW-0648">Protein biosynthesis</keyword>
<keyword id="KW-0694">RNA-binding</keyword>
<keyword id="KW-0820">tRNA-binding</keyword>
<keyword id="KW-0862">Zinc</keyword>
<comment type="function">
    <text evidence="1">Is required not only for elongation of protein synthesis but also for the initiation of all mRNA translation through initiator tRNA(fMet) aminoacylation.</text>
</comment>
<comment type="catalytic activity">
    <reaction evidence="1">
        <text>tRNA(Met) + L-methionine + ATP = L-methionyl-tRNA(Met) + AMP + diphosphate</text>
        <dbReference type="Rhea" id="RHEA:13481"/>
        <dbReference type="Rhea" id="RHEA-COMP:9667"/>
        <dbReference type="Rhea" id="RHEA-COMP:9698"/>
        <dbReference type="ChEBI" id="CHEBI:30616"/>
        <dbReference type="ChEBI" id="CHEBI:33019"/>
        <dbReference type="ChEBI" id="CHEBI:57844"/>
        <dbReference type="ChEBI" id="CHEBI:78442"/>
        <dbReference type="ChEBI" id="CHEBI:78530"/>
        <dbReference type="ChEBI" id="CHEBI:456215"/>
        <dbReference type="EC" id="6.1.1.10"/>
    </reaction>
</comment>
<comment type="cofactor">
    <cofactor evidence="1">
        <name>Zn(2+)</name>
        <dbReference type="ChEBI" id="CHEBI:29105"/>
    </cofactor>
    <text evidence="1">Binds 1 zinc ion per subunit.</text>
</comment>
<comment type="subunit">
    <text evidence="1">Homodimer.</text>
</comment>
<comment type="subcellular location">
    <subcellularLocation>
        <location evidence="1">Cytoplasm</location>
    </subcellularLocation>
</comment>
<comment type="similarity">
    <text evidence="1">Belongs to the class-I aminoacyl-tRNA synthetase family. MetG type 1 subfamily.</text>
</comment>
<protein>
    <recommendedName>
        <fullName evidence="1">Methionine--tRNA ligase</fullName>
        <ecNumber evidence="1">6.1.1.10</ecNumber>
    </recommendedName>
    <alternativeName>
        <fullName evidence="1">Methionyl-tRNA synthetase</fullName>
        <shortName evidence="1">MetRS</shortName>
    </alternativeName>
</protein>
<feature type="chain" id="PRO_0000331794" description="Methionine--tRNA ligase">
    <location>
        <begin position="1"/>
        <end position="725"/>
    </location>
</feature>
<feature type="domain" description="tRNA-binding" evidence="1">
    <location>
        <begin position="619"/>
        <end position="725"/>
    </location>
</feature>
<feature type="short sequence motif" description="'HIGH' region">
    <location>
        <begin position="27"/>
        <end position="37"/>
    </location>
</feature>
<feature type="short sequence motif" description="'KMSKS' region">
    <location>
        <begin position="348"/>
        <end position="352"/>
    </location>
</feature>
<feature type="binding site" evidence="1">
    <location>
        <position position="158"/>
    </location>
    <ligand>
        <name>Zn(2+)</name>
        <dbReference type="ChEBI" id="CHEBI:29105"/>
    </ligand>
</feature>
<feature type="binding site" evidence="1">
    <location>
        <position position="161"/>
    </location>
    <ligand>
        <name>Zn(2+)</name>
        <dbReference type="ChEBI" id="CHEBI:29105"/>
    </ligand>
</feature>
<feature type="binding site" evidence="1">
    <location>
        <position position="171"/>
    </location>
    <ligand>
        <name>Zn(2+)</name>
        <dbReference type="ChEBI" id="CHEBI:29105"/>
    </ligand>
</feature>
<feature type="binding site" evidence="1">
    <location>
        <position position="174"/>
    </location>
    <ligand>
        <name>Zn(2+)</name>
        <dbReference type="ChEBI" id="CHEBI:29105"/>
    </ligand>
</feature>
<feature type="binding site" evidence="1">
    <location>
        <position position="351"/>
    </location>
    <ligand>
        <name>ATP</name>
        <dbReference type="ChEBI" id="CHEBI:30616"/>
    </ligand>
</feature>
<sequence length="725" mass="79885">MSASDLTSVQAGAPQGRRQILVTSALPYANGQIHIGHLVEYIQTDIWVRTMRMHGHEIYYIGADDTHGTPVMLRAEQEGVSPKQLIERVWREHKRDFDSFGVSFDNFYTTDSDENRVLSETIYLALKEAGFIAEREIEQAYDPVRQMFLPDRFIKGECPKCHAKDQYGDSCEVCGTTYQPTDLIHPYSVVSGAAPVRKTSTHYFFRLSDPRCEAFLREWVSGLAQPEATNKMREWLGEAGEAKLADWDISRDAPYFGFEIPGAPGKYFYVWLDAPVGYYASFKNLCERRGLDFDAWIRKDSTTEQYHFIGKDILYFHTLFWPAMLEFSGHRTPTNVFAHGFLTVDGAKMSKSRGTFITAQSYIDTGLNPEWLRYYFAAKLNATMEDIDLNLEDFQARVNSDLVGKYVNIASRAAGFLLKRFDGRVQASAMNHPLLATLRGAIPQIAAHYEAREYGRALRQTMELADAVNGYVDSAKPWELAKDPANAVALHETCSVSLEAFRLLSLALKPVLPRVAQGVEAFLGIAPLTWADAGTPLSPEQPVRAYQHLMTRVDPKQIDALLAANRGSLQGTAAAAEAGAANGNGAGSKNGKGAKAAAQPAASAANADDGASPIISIDDFAKIDLRIAKIVACQAVEGSDKLLQLTLDVGEERTRNVFSGIKSAYRPEQLVGKLTVMVANLAPRKMKFGLSEGMVLAASAADEKAEPGLYILEPHSGAKPGMRVK</sequence>
<evidence type="ECO:0000255" key="1">
    <source>
        <dbReference type="HAMAP-Rule" id="MF_00098"/>
    </source>
</evidence>
<dbReference type="EC" id="6.1.1.10" evidence="1"/>
<dbReference type="EMBL" id="CP000124">
    <property type="protein sequence ID" value="ABA49211.1"/>
    <property type="molecule type" value="Genomic_DNA"/>
</dbReference>
<dbReference type="RefSeq" id="WP_004526324.1">
    <property type="nucleotide sequence ID" value="NC_007434.1"/>
</dbReference>
<dbReference type="SMR" id="Q3JUY1"/>
<dbReference type="EnsemblBacteria" id="ABA49211">
    <property type="protein sequence ID" value="ABA49211"/>
    <property type="gene ID" value="BURPS1710b_1211"/>
</dbReference>
<dbReference type="KEGG" id="bpm:BURPS1710b_1211"/>
<dbReference type="HOGENOM" id="CLU_009710_7_0_4"/>
<dbReference type="Proteomes" id="UP000002700">
    <property type="component" value="Chromosome I"/>
</dbReference>
<dbReference type="GO" id="GO:0005829">
    <property type="term" value="C:cytosol"/>
    <property type="evidence" value="ECO:0007669"/>
    <property type="project" value="TreeGrafter"/>
</dbReference>
<dbReference type="GO" id="GO:0005524">
    <property type="term" value="F:ATP binding"/>
    <property type="evidence" value="ECO:0007669"/>
    <property type="project" value="UniProtKB-UniRule"/>
</dbReference>
<dbReference type="GO" id="GO:0046872">
    <property type="term" value="F:metal ion binding"/>
    <property type="evidence" value="ECO:0007669"/>
    <property type="project" value="UniProtKB-KW"/>
</dbReference>
<dbReference type="GO" id="GO:0004825">
    <property type="term" value="F:methionine-tRNA ligase activity"/>
    <property type="evidence" value="ECO:0007669"/>
    <property type="project" value="UniProtKB-UniRule"/>
</dbReference>
<dbReference type="GO" id="GO:0000049">
    <property type="term" value="F:tRNA binding"/>
    <property type="evidence" value="ECO:0007669"/>
    <property type="project" value="UniProtKB-KW"/>
</dbReference>
<dbReference type="GO" id="GO:0006431">
    <property type="term" value="P:methionyl-tRNA aminoacylation"/>
    <property type="evidence" value="ECO:0007669"/>
    <property type="project" value="UniProtKB-UniRule"/>
</dbReference>
<dbReference type="CDD" id="cd07957">
    <property type="entry name" value="Anticodon_Ia_Met"/>
    <property type="match status" value="1"/>
</dbReference>
<dbReference type="CDD" id="cd00814">
    <property type="entry name" value="MetRS_core"/>
    <property type="match status" value="1"/>
</dbReference>
<dbReference type="CDD" id="cd02800">
    <property type="entry name" value="tRNA_bind_EcMetRS_like"/>
    <property type="match status" value="1"/>
</dbReference>
<dbReference type="FunFam" id="2.20.28.20:FF:000001">
    <property type="entry name" value="Methionine--tRNA ligase"/>
    <property type="match status" value="1"/>
</dbReference>
<dbReference type="FunFam" id="2.40.50.140:FF:000042">
    <property type="entry name" value="Methionine--tRNA ligase"/>
    <property type="match status" value="1"/>
</dbReference>
<dbReference type="Gene3D" id="3.40.50.620">
    <property type="entry name" value="HUPs"/>
    <property type="match status" value="1"/>
</dbReference>
<dbReference type="Gene3D" id="1.10.730.10">
    <property type="entry name" value="Isoleucyl-tRNA Synthetase, Domain 1"/>
    <property type="match status" value="1"/>
</dbReference>
<dbReference type="Gene3D" id="2.20.28.20">
    <property type="entry name" value="Methionyl-tRNA synthetase, Zn-domain"/>
    <property type="match status" value="1"/>
</dbReference>
<dbReference type="Gene3D" id="2.40.50.140">
    <property type="entry name" value="Nucleic acid-binding proteins"/>
    <property type="match status" value="1"/>
</dbReference>
<dbReference type="HAMAP" id="MF_00098">
    <property type="entry name" value="Met_tRNA_synth_type1"/>
    <property type="match status" value="1"/>
</dbReference>
<dbReference type="InterPro" id="IPR001412">
    <property type="entry name" value="aa-tRNA-synth_I_CS"/>
</dbReference>
<dbReference type="InterPro" id="IPR041872">
    <property type="entry name" value="Anticodon_Met"/>
</dbReference>
<dbReference type="InterPro" id="IPR004495">
    <property type="entry name" value="Met-tRNA-synth_bsu_C"/>
</dbReference>
<dbReference type="InterPro" id="IPR023458">
    <property type="entry name" value="Met-tRNA_ligase_1"/>
</dbReference>
<dbReference type="InterPro" id="IPR014758">
    <property type="entry name" value="Met-tRNA_synth"/>
</dbReference>
<dbReference type="InterPro" id="IPR015413">
    <property type="entry name" value="Methionyl/Leucyl_tRNA_Synth"/>
</dbReference>
<dbReference type="InterPro" id="IPR033911">
    <property type="entry name" value="MetRS_core"/>
</dbReference>
<dbReference type="InterPro" id="IPR029038">
    <property type="entry name" value="MetRS_Zn"/>
</dbReference>
<dbReference type="InterPro" id="IPR012340">
    <property type="entry name" value="NA-bd_OB-fold"/>
</dbReference>
<dbReference type="InterPro" id="IPR014729">
    <property type="entry name" value="Rossmann-like_a/b/a_fold"/>
</dbReference>
<dbReference type="InterPro" id="IPR002547">
    <property type="entry name" value="tRNA-bd_dom"/>
</dbReference>
<dbReference type="InterPro" id="IPR009080">
    <property type="entry name" value="tRNAsynth_Ia_anticodon-bd"/>
</dbReference>
<dbReference type="NCBIfam" id="TIGR00398">
    <property type="entry name" value="metG"/>
    <property type="match status" value="1"/>
</dbReference>
<dbReference type="NCBIfam" id="TIGR00399">
    <property type="entry name" value="metG_C_term"/>
    <property type="match status" value="1"/>
</dbReference>
<dbReference type="NCBIfam" id="NF001100">
    <property type="entry name" value="PRK00133.1"/>
    <property type="match status" value="1"/>
</dbReference>
<dbReference type="PANTHER" id="PTHR45765">
    <property type="entry name" value="METHIONINE--TRNA LIGASE"/>
    <property type="match status" value="1"/>
</dbReference>
<dbReference type="PANTHER" id="PTHR45765:SF1">
    <property type="entry name" value="METHIONINE--TRNA LIGASE, CYTOPLASMIC"/>
    <property type="match status" value="1"/>
</dbReference>
<dbReference type="Pfam" id="PF19303">
    <property type="entry name" value="Anticodon_3"/>
    <property type="match status" value="1"/>
</dbReference>
<dbReference type="Pfam" id="PF09334">
    <property type="entry name" value="tRNA-synt_1g"/>
    <property type="match status" value="1"/>
</dbReference>
<dbReference type="Pfam" id="PF01588">
    <property type="entry name" value="tRNA_bind"/>
    <property type="match status" value="1"/>
</dbReference>
<dbReference type="PRINTS" id="PR01041">
    <property type="entry name" value="TRNASYNTHMET"/>
</dbReference>
<dbReference type="SUPFAM" id="SSF47323">
    <property type="entry name" value="Anticodon-binding domain of a subclass of class I aminoacyl-tRNA synthetases"/>
    <property type="match status" value="1"/>
</dbReference>
<dbReference type="SUPFAM" id="SSF57770">
    <property type="entry name" value="Methionyl-tRNA synthetase (MetRS), Zn-domain"/>
    <property type="match status" value="1"/>
</dbReference>
<dbReference type="SUPFAM" id="SSF50249">
    <property type="entry name" value="Nucleic acid-binding proteins"/>
    <property type="match status" value="1"/>
</dbReference>
<dbReference type="SUPFAM" id="SSF52374">
    <property type="entry name" value="Nucleotidylyl transferase"/>
    <property type="match status" value="1"/>
</dbReference>
<dbReference type="PROSITE" id="PS00178">
    <property type="entry name" value="AA_TRNA_LIGASE_I"/>
    <property type="match status" value="1"/>
</dbReference>
<dbReference type="PROSITE" id="PS50886">
    <property type="entry name" value="TRBD"/>
    <property type="match status" value="1"/>
</dbReference>
<gene>
    <name evidence="1" type="primary">metG</name>
    <name type="ordered locus">BURPS1710b_1211</name>
</gene>
<accession>Q3JUY1</accession>
<name>SYM_BURP1</name>
<proteinExistence type="inferred from homology"/>